<gene>
    <name type="primary">fgaDH</name>
</gene>
<feature type="chain" id="PRO_0000421746" description="Chanoclavine-I dehydrogenase">
    <location>
        <begin position="1"/>
        <end position="261"/>
    </location>
</feature>
<feature type="active site" description="Proton donor" evidence="2">
    <location>
        <position position="166"/>
    </location>
</feature>
<feature type="active site" description="Lowers pKa of active site Tyr" evidence="2">
    <location>
        <position position="170"/>
    </location>
</feature>
<feature type="binding site" evidence="1">
    <location>
        <position position="18"/>
    </location>
    <ligand>
        <name>NADP(+)</name>
        <dbReference type="ChEBI" id="CHEBI:58349"/>
    </ligand>
</feature>
<feature type="binding site" evidence="1">
    <location>
        <position position="48"/>
    </location>
    <ligand>
        <name>NADP(+)</name>
        <dbReference type="ChEBI" id="CHEBI:58349"/>
    </ligand>
</feature>
<feature type="binding site" evidence="1">
    <location>
        <position position="66"/>
    </location>
    <ligand>
        <name>NADP(+)</name>
        <dbReference type="ChEBI" id="CHEBI:58349"/>
    </ligand>
</feature>
<feature type="binding site" evidence="1">
    <location>
        <position position="132"/>
    </location>
    <ligand>
        <name>NADP(+)</name>
        <dbReference type="ChEBI" id="CHEBI:58349"/>
    </ligand>
</feature>
<feature type="binding site" evidence="2">
    <location>
        <position position="166"/>
    </location>
    <ligand>
        <name>NADP(+)</name>
        <dbReference type="ChEBI" id="CHEBI:58349"/>
    </ligand>
</feature>
<feature type="binding site" evidence="2">
    <location>
        <position position="170"/>
    </location>
    <ligand>
        <name>NADP(+)</name>
        <dbReference type="ChEBI" id="CHEBI:58349"/>
    </ligand>
</feature>
<feature type="binding site" evidence="1">
    <location>
        <position position="201"/>
    </location>
    <ligand>
        <name>NADP(+)</name>
        <dbReference type="ChEBI" id="CHEBI:58349"/>
    </ligand>
</feature>
<name>CHADH_ASPFM</name>
<accession>D3J0Z1</accession>
<reference key="1">
    <citation type="journal article" date="2010" name="Arch. Microbiol.">
        <title>Ergot alkaloid biosynthesis in Aspergillus fumigatus: conversion of chanoclavine-I to chanoclavine-I aldehyde catalyzed by a short-chain alcohol dehydrogenase FgaDH.</title>
        <authorList>
            <person name="Wallwey C."/>
            <person name="Matuschek M."/>
            <person name="Li S.M."/>
        </authorList>
    </citation>
    <scope>NUCLEOTIDE SEQUENCE [MRNA]</scope>
    <scope>FUNCTION</scope>
    <scope>CATALYTIC ACTIVITY</scope>
    <scope>SUBUNIT</scope>
    <scope>PATHWAY</scope>
    <scope>BIOPHYSICOCHEMICAL PROPERTIES</scope>
    <source>
        <strain>NIH 5233 / ATCC 13073</strain>
    </source>
</reference>
<proteinExistence type="evidence at protein level"/>
<comment type="function">
    <text evidence="3">Oxidoreductase involved in the biosynthesis of ergot alkaloid biosynthesis. Catalyzes the oxidation of chanoclavine-I in the presence of NAD(+) resulting in the formation of chanoclavine-I aldehyde. Ergot alkaloids, which are produced by endophyte fungi, can enhance plant host fitness, but also cause livestock toxicosis to host plants.</text>
</comment>
<comment type="catalytic activity">
    <reaction evidence="3">
        <text>chanoclavine-I + NAD(+) = chanoclavine-I aldehyde + NADH + H(+)</text>
        <dbReference type="Rhea" id="RHEA:33891"/>
        <dbReference type="ChEBI" id="CHEBI:15378"/>
        <dbReference type="ChEBI" id="CHEBI:57540"/>
        <dbReference type="ChEBI" id="CHEBI:57945"/>
        <dbReference type="ChEBI" id="CHEBI:71487"/>
        <dbReference type="ChEBI" id="CHEBI:72949"/>
        <dbReference type="EC" id="1.1.1.332"/>
    </reaction>
</comment>
<comment type="biophysicochemical properties">
    <kinetics>
        <KM evidence="3">0.27 mM for chanoclavine-I</KM>
        <KM evidence="3">1.1 mM for NAD(+)</KM>
        <Vmax evidence="3">186.0 nmol/min/mg enzyme</Vmax>
    </kinetics>
</comment>
<comment type="pathway">
    <text evidence="3">Alkaloid biosynthesis; ergot alkaloid biosynthesis.</text>
</comment>
<comment type="subunit">
    <text evidence="3">Homotetramer.</text>
</comment>
<comment type="similarity">
    <text evidence="4">Belongs to the short-chain dehydrogenases/reductases (SDR) family.</text>
</comment>
<evidence type="ECO:0000250" key="1">
    <source>
        <dbReference type="UniProtKB" id="L0E2Z4"/>
    </source>
</evidence>
<evidence type="ECO:0000250" key="2">
    <source>
        <dbReference type="UniProtKB" id="O93868"/>
    </source>
</evidence>
<evidence type="ECO:0000269" key="3">
    <source>
    </source>
</evidence>
<evidence type="ECO:0000305" key="4"/>
<organism>
    <name type="scientific">Aspergillus fumigatus</name>
    <name type="common">Neosartorya fumigata</name>
    <dbReference type="NCBI Taxonomy" id="746128"/>
    <lineage>
        <taxon>Eukaryota</taxon>
        <taxon>Fungi</taxon>
        <taxon>Dikarya</taxon>
        <taxon>Ascomycota</taxon>
        <taxon>Pezizomycotina</taxon>
        <taxon>Eurotiomycetes</taxon>
        <taxon>Eurotiomycetidae</taxon>
        <taxon>Eurotiales</taxon>
        <taxon>Aspergillaceae</taxon>
        <taxon>Aspergillus</taxon>
        <taxon>Aspergillus subgen. Fumigati</taxon>
    </lineage>
</organism>
<protein>
    <recommendedName>
        <fullName>Chanoclavine-I dehydrogenase</fullName>
        <shortName>ChaDH</shortName>
        <ecNumber>1.1.1.332</ecNumber>
    </recommendedName>
</protein>
<keyword id="KW-0017">Alkaloid metabolism</keyword>
<keyword id="KW-0521">NADP</keyword>
<keyword id="KW-0560">Oxidoreductase</keyword>
<dbReference type="EC" id="1.1.1.332"/>
<dbReference type="EMBL" id="GQ413954">
    <property type="protein sequence ID" value="ADB93017.1"/>
    <property type="molecule type" value="mRNA"/>
</dbReference>
<dbReference type="SMR" id="D3J0Z1"/>
<dbReference type="BRENDA" id="1.1.1.332">
    <property type="organism ID" value="508"/>
</dbReference>
<dbReference type="SABIO-RK" id="D3J0Z1"/>
<dbReference type="UniPathway" id="UPA00327"/>
<dbReference type="GO" id="GO:0016616">
    <property type="term" value="F:oxidoreductase activity, acting on the CH-OH group of donors, NAD or NADP as acceptor"/>
    <property type="evidence" value="ECO:0000314"/>
    <property type="project" value="UniProtKB"/>
</dbReference>
<dbReference type="GO" id="GO:0035837">
    <property type="term" value="P:ergot alkaloid biosynthetic process"/>
    <property type="evidence" value="ECO:0000314"/>
    <property type="project" value="UniProtKB"/>
</dbReference>
<dbReference type="GO" id="GO:0051289">
    <property type="term" value="P:protein homotetramerization"/>
    <property type="evidence" value="ECO:0000314"/>
    <property type="project" value="UniProtKB"/>
</dbReference>
<dbReference type="CDD" id="cd05233">
    <property type="entry name" value="SDR_c"/>
    <property type="match status" value="1"/>
</dbReference>
<dbReference type="FunFam" id="3.40.50.720:FF:000979">
    <property type="entry name" value="Chanoclavine-I dehydrogenase easD"/>
    <property type="match status" value="1"/>
</dbReference>
<dbReference type="Gene3D" id="3.40.50.720">
    <property type="entry name" value="NAD(P)-binding Rossmann-like Domain"/>
    <property type="match status" value="1"/>
</dbReference>
<dbReference type="InterPro" id="IPR036291">
    <property type="entry name" value="NAD(P)-bd_dom_sf"/>
</dbReference>
<dbReference type="InterPro" id="IPR002347">
    <property type="entry name" value="SDR_fam"/>
</dbReference>
<dbReference type="PANTHER" id="PTHR24321">
    <property type="entry name" value="DEHYDROGENASES, SHORT CHAIN"/>
    <property type="match status" value="1"/>
</dbReference>
<dbReference type="PANTHER" id="PTHR24321:SF8">
    <property type="entry name" value="ESTRADIOL 17-BETA-DEHYDROGENASE 8-RELATED"/>
    <property type="match status" value="1"/>
</dbReference>
<dbReference type="Pfam" id="PF00106">
    <property type="entry name" value="adh_short"/>
    <property type="match status" value="1"/>
</dbReference>
<dbReference type="PRINTS" id="PR00081">
    <property type="entry name" value="GDHRDH"/>
</dbReference>
<dbReference type="SUPFAM" id="SSF51735">
    <property type="entry name" value="NAD(P)-binding Rossmann-fold domains"/>
    <property type="match status" value="1"/>
</dbReference>
<sequence length="261" mass="27796">MASVESRIIAITGGASGIGAATCRLLAERGAAVLCVCDISPKNFDDLKISIKKINPSTKVHCATVDVTSSVEVRQWIEGIISDFGDLHGAVNAAGIAQGAGMRNTPTIAEEVDEEWTRIMNTNLNGVFYCTREEVRAMKGLPATDRSIVNVGSIASVSHMPDVYAYGTSKGACAYFTTCVAADAFPLGIRINNVSPGVTNTPMLPQFAPMAKTFEEIEESYKKEGLSLIEAEDVARTIVWLLSEDSRPVFGANINVGACMP</sequence>